<name>RS12_MYCMS</name>
<reference key="1">
    <citation type="journal article" date="2002" name="Vet. Microbiol.">
        <title>Genetic and antigenic characterisation of elongation factor Tu from Mycoplasma mycoides subsp. mycoides SC.</title>
        <authorList>
            <person name="Martin-Alonso J.M."/>
            <person name="Prieto M."/>
            <person name="Parra F."/>
        </authorList>
    </citation>
    <scope>NUCLEOTIDE SEQUENCE [GENOMIC DNA]</scope>
</reference>
<reference key="2">
    <citation type="journal article" date="2004" name="Genome Res.">
        <title>The genome sequence of Mycoplasma mycoides subsp. mycoides SC type strain PG1T, the causative agent of contagious bovine pleuropneumonia (CBPP).</title>
        <authorList>
            <person name="Westberg J."/>
            <person name="Persson A."/>
            <person name="Holmberg A."/>
            <person name="Goesmann A."/>
            <person name="Lundeberg J."/>
            <person name="Johansson K.-E."/>
            <person name="Pettersson B."/>
            <person name="Uhlen M."/>
        </authorList>
    </citation>
    <scope>NUCLEOTIDE SEQUENCE [LARGE SCALE GENOMIC DNA]</scope>
    <source>
        <strain>CCUG 32753 / NCTC 10114 / PG1</strain>
    </source>
</reference>
<accession>Q8VMU2</accession>
<keyword id="KW-1185">Reference proteome</keyword>
<keyword id="KW-0687">Ribonucleoprotein</keyword>
<keyword id="KW-0689">Ribosomal protein</keyword>
<keyword id="KW-0694">RNA-binding</keyword>
<keyword id="KW-0699">rRNA-binding</keyword>
<keyword id="KW-0820">tRNA-binding</keyword>
<feature type="chain" id="PRO_0000146265" description="Small ribosomal subunit protein uS12">
    <location>
        <begin position="1"/>
        <end position="139"/>
    </location>
</feature>
<feature type="sequence conflict" description="In Ref. 1; CAC87985/CAD21851." evidence="2" ref="1">
    <original>R</original>
    <variation>I</variation>
    <location>
        <position position="69"/>
    </location>
</feature>
<feature type="sequence conflict" description="In Ref. 1; CAC87985/CAD21851." evidence="2" ref="1">
    <original>MEV</original>
    <variation>VEG</variation>
    <location>
        <begin position="74"/>
        <end position="76"/>
    </location>
</feature>
<feature type="sequence conflict" description="In Ref. 1; CAC87985/CAD21851." evidence="2" ref="1">
    <original>Q</original>
    <variation>R</variation>
    <location>
        <position position="88"/>
    </location>
</feature>
<feature type="sequence conflict" description="In Ref. 1; CAC87985/CAD21851." evidence="2" ref="1">
    <original>S</original>
    <variation>R</variation>
    <location>
        <position position="91"/>
    </location>
</feature>
<feature type="sequence conflict" description="In Ref. 1; CAC87985/CAD21851." evidence="2" ref="1">
    <original>T</original>
    <variation>A</variation>
    <location>
        <position position="114"/>
    </location>
</feature>
<proteinExistence type="inferred from homology"/>
<organism>
    <name type="scientific">Mycoplasma mycoides subsp. mycoides SC (strain CCUG 32753 / NCTC 10114 / PG1)</name>
    <dbReference type="NCBI Taxonomy" id="272632"/>
    <lineage>
        <taxon>Bacteria</taxon>
        <taxon>Bacillati</taxon>
        <taxon>Mycoplasmatota</taxon>
        <taxon>Mollicutes</taxon>
        <taxon>Mycoplasmataceae</taxon>
        <taxon>Mycoplasma</taxon>
    </lineage>
</organism>
<dbReference type="EMBL" id="AJ345083">
    <property type="protein sequence ID" value="CAC87985.1"/>
    <property type="molecule type" value="Genomic_DNA"/>
</dbReference>
<dbReference type="EMBL" id="AJ419601">
    <property type="protein sequence ID" value="CAD21851.1"/>
    <property type="molecule type" value="Genomic_DNA"/>
</dbReference>
<dbReference type="EMBL" id="BX293980">
    <property type="protein sequence ID" value="CAE76802.1"/>
    <property type="status" value="ALT_INIT"/>
    <property type="molecule type" value="Genomic_DNA"/>
</dbReference>
<dbReference type="RefSeq" id="NP_975160.3">
    <property type="nucleotide sequence ID" value="NC_005364.2"/>
</dbReference>
<dbReference type="RefSeq" id="WP_008362393.1">
    <property type="nucleotide sequence ID" value="NC_005364.2"/>
</dbReference>
<dbReference type="SMR" id="Q8VMU2"/>
<dbReference type="STRING" id="272632.MSC_0157"/>
<dbReference type="GeneID" id="93426637"/>
<dbReference type="KEGG" id="mmy:MSC_0157"/>
<dbReference type="PATRIC" id="fig|272632.4.peg.166"/>
<dbReference type="eggNOG" id="COG0048">
    <property type="taxonomic scope" value="Bacteria"/>
</dbReference>
<dbReference type="HOGENOM" id="CLU_104295_1_1_14"/>
<dbReference type="Proteomes" id="UP000001016">
    <property type="component" value="Chromosome"/>
</dbReference>
<dbReference type="GO" id="GO:0015935">
    <property type="term" value="C:small ribosomal subunit"/>
    <property type="evidence" value="ECO:0007669"/>
    <property type="project" value="InterPro"/>
</dbReference>
<dbReference type="GO" id="GO:0019843">
    <property type="term" value="F:rRNA binding"/>
    <property type="evidence" value="ECO:0007669"/>
    <property type="project" value="UniProtKB-UniRule"/>
</dbReference>
<dbReference type="GO" id="GO:0003735">
    <property type="term" value="F:structural constituent of ribosome"/>
    <property type="evidence" value="ECO:0007669"/>
    <property type="project" value="InterPro"/>
</dbReference>
<dbReference type="GO" id="GO:0000049">
    <property type="term" value="F:tRNA binding"/>
    <property type="evidence" value="ECO:0007669"/>
    <property type="project" value="UniProtKB-UniRule"/>
</dbReference>
<dbReference type="GO" id="GO:0006412">
    <property type="term" value="P:translation"/>
    <property type="evidence" value="ECO:0007669"/>
    <property type="project" value="UniProtKB-UniRule"/>
</dbReference>
<dbReference type="CDD" id="cd03368">
    <property type="entry name" value="Ribosomal_S12"/>
    <property type="match status" value="1"/>
</dbReference>
<dbReference type="FunFam" id="2.40.50.140:FF:000001">
    <property type="entry name" value="30S ribosomal protein S12"/>
    <property type="match status" value="1"/>
</dbReference>
<dbReference type="Gene3D" id="2.40.50.140">
    <property type="entry name" value="Nucleic acid-binding proteins"/>
    <property type="match status" value="1"/>
</dbReference>
<dbReference type="HAMAP" id="MF_00403_B">
    <property type="entry name" value="Ribosomal_uS12_B"/>
    <property type="match status" value="1"/>
</dbReference>
<dbReference type="InterPro" id="IPR012340">
    <property type="entry name" value="NA-bd_OB-fold"/>
</dbReference>
<dbReference type="InterPro" id="IPR006032">
    <property type="entry name" value="Ribosomal_uS12"/>
</dbReference>
<dbReference type="InterPro" id="IPR005679">
    <property type="entry name" value="Ribosomal_uS12_bac"/>
</dbReference>
<dbReference type="NCBIfam" id="TIGR00981">
    <property type="entry name" value="rpsL_bact"/>
    <property type="match status" value="1"/>
</dbReference>
<dbReference type="PANTHER" id="PTHR11652">
    <property type="entry name" value="30S RIBOSOMAL PROTEIN S12 FAMILY MEMBER"/>
    <property type="match status" value="1"/>
</dbReference>
<dbReference type="Pfam" id="PF00164">
    <property type="entry name" value="Ribosom_S12_S23"/>
    <property type="match status" value="1"/>
</dbReference>
<dbReference type="PIRSF" id="PIRSF002133">
    <property type="entry name" value="Ribosomal_S12/S23"/>
    <property type="match status" value="1"/>
</dbReference>
<dbReference type="PRINTS" id="PR01034">
    <property type="entry name" value="RIBOSOMALS12"/>
</dbReference>
<dbReference type="SUPFAM" id="SSF50249">
    <property type="entry name" value="Nucleic acid-binding proteins"/>
    <property type="match status" value="1"/>
</dbReference>
<dbReference type="PROSITE" id="PS00055">
    <property type="entry name" value="RIBOSOMAL_S12"/>
    <property type="match status" value="1"/>
</dbReference>
<gene>
    <name evidence="1" type="primary">rpsL</name>
    <name evidence="1" type="synonym">rps12</name>
    <name type="ordered locus">MSC_0157</name>
</gene>
<comment type="function">
    <text evidence="1">With S4 and S5 plays an important role in translational accuracy.</text>
</comment>
<comment type="function">
    <text evidence="1">Interacts with and stabilizes bases of the 16S rRNA that are involved in tRNA selection in the A site and with the mRNA backbone. Located at the interface of the 30S and 50S subunits, it traverses the body of the 30S subunit contacting proteins on the other side and probably holding the rRNA structure together. The combined cluster of proteins S8, S12 and S17 appears to hold together the shoulder and platform of the 30S subunit.</text>
</comment>
<comment type="subunit">
    <text evidence="1">Part of the 30S ribosomal subunit. Contacts proteins S8 and S17. May interact with IF1 in the 30S initiation complex.</text>
</comment>
<comment type="similarity">
    <text evidence="1">Belongs to the universal ribosomal protein uS12 family.</text>
</comment>
<comment type="caution">
    <text evidence="2">Because the enzyme that would modify Asp-102 to 3-methylthioaspartic acid has not been found in the proteome of this organism, that modification is not predicted.</text>
</comment>
<comment type="sequence caution" evidence="2">
    <conflict type="erroneous initiation">
        <sequence resource="EMBL-CDS" id="CAE76802"/>
    </conflict>
</comment>
<evidence type="ECO:0000255" key="1">
    <source>
        <dbReference type="HAMAP-Rule" id="MF_00403"/>
    </source>
</evidence>
<evidence type="ECO:0000305" key="2"/>
<protein>
    <recommendedName>
        <fullName evidence="1">Small ribosomal subunit protein uS12</fullName>
    </recommendedName>
    <alternativeName>
        <fullName evidence="2">30S ribosomal protein S12</fullName>
    </alternativeName>
</protein>
<sequence>MPTINQLVKVNRKAKTWKTKAPALNRGINTLIKKVTKIASPQKRGVCTRVATMTPKKPNSALRKYARVRLTNGMEVNAYIPGEGHNLQEHSVVLIRGGRVKDLPGVRYHVIRGTLDTQGVAKRSQGRSLYGVKRPKVKK</sequence>